<feature type="chain" id="PRO_1000048352" description="Glutaminase">
    <location>
        <begin position="1"/>
        <end position="307"/>
    </location>
</feature>
<feature type="binding site" evidence="1">
    <location>
        <position position="66"/>
    </location>
    <ligand>
        <name>substrate</name>
    </ligand>
</feature>
<feature type="binding site" evidence="1">
    <location>
        <position position="116"/>
    </location>
    <ligand>
        <name>substrate</name>
    </ligand>
</feature>
<feature type="binding site" evidence="1">
    <location>
        <position position="160"/>
    </location>
    <ligand>
        <name>substrate</name>
    </ligand>
</feature>
<feature type="binding site" evidence="1">
    <location>
        <position position="167"/>
    </location>
    <ligand>
        <name>substrate</name>
    </ligand>
</feature>
<feature type="binding site" evidence="1">
    <location>
        <position position="191"/>
    </location>
    <ligand>
        <name>substrate</name>
    </ligand>
</feature>
<feature type="binding site" evidence="1">
    <location>
        <position position="243"/>
    </location>
    <ligand>
        <name>substrate</name>
    </ligand>
</feature>
<feature type="binding site" evidence="1">
    <location>
        <position position="261"/>
    </location>
    <ligand>
        <name>substrate</name>
    </ligand>
</feature>
<sequence>MDAIDYKKIFSEIVNELSSEDEKGSVATYIPELANVDPNKLGMHLTTVTNQHFAYGDAEEAFSIQSIAKVWSLTLALKHLGADTWQRVGVEPSGTAFNSLVQLEYEMGIPRNPFINAGAIVVCDILVSCLKNPKEDLLDFIRTSSGIPSIEYCPVIAESEVKTGHRNYALAHMMKGFGNIHNDVDCVLDLYFSLCSIKLTCKQLAQAFLFLAAGGVNPATQQQVITPKRTKRINSIMQMCGFYDEAGEFAFKVGLPGKSGVGGGIVAVHPGKYCIAVFSPRLNASGNSVKAMKVLEALTTKTELSIF</sequence>
<evidence type="ECO:0000255" key="1">
    <source>
        <dbReference type="HAMAP-Rule" id="MF_00313"/>
    </source>
</evidence>
<comment type="catalytic activity">
    <reaction evidence="1">
        <text>L-glutamine + H2O = L-glutamate + NH4(+)</text>
        <dbReference type="Rhea" id="RHEA:15889"/>
        <dbReference type="ChEBI" id="CHEBI:15377"/>
        <dbReference type="ChEBI" id="CHEBI:28938"/>
        <dbReference type="ChEBI" id="CHEBI:29985"/>
        <dbReference type="ChEBI" id="CHEBI:58359"/>
        <dbReference type="EC" id="3.5.1.2"/>
    </reaction>
</comment>
<comment type="subunit">
    <text evidence="1">Homotetramer.</text>
</comment>
<comment type="similarity">
    <text evidence="1">Belongs to the glutaminase family.</text>
</comment>
<dbReference type="EC" id="3.5.1.2" evidence="1"/>
<dbReference type="EMBL" id="CP000282">
    <property type="protein sequence ID" value="ABD82124.1"/>
    <property type="molecule type" value="Genomic_DNA"/>
</dbReference>
<dbReference type="RefSeq" id="WP_011469340.1">
    <property type="nucleotide sequence ID" value="NC_007912.1"/>
</dbReference>
<dbReference type="SMR" id="Q21GQ5"/>
<dbReference type="STRING" id="203122.Sde_2867"/>
<dbReference type="GeneID" id="98614515"/>
<dbReference type="KEGG" id="sde:Sde_2867"/>
<dbReference type="eggNOG" id="COG2066">
    <property type="taxonomic scope" value="Bacteria"/>
</dbReference>
<dbReference type="HOGENOM" id="CLU_027932_1_1_6"/>
<dbReference type="OrthoDB" id="9788822at2"/>
<dbReference type="Proteomes" id="UP000001947">
    <property type="component" value="Chromosome"/>
</dbReference>
<dbReference type="GO" id="GO:0004359">
    <property type="term" value="F:glutaminase activity"/>
    <property type="evidence" value="ECO:0007669"/>
    <property type="project" value="UniProtKB-UniRule"/>
</dbReference>
<dbReference type="GO" id="GO:0006537">
    <property type="term" value="P:glutamate biosynthetic process"/>
    <property type="evidence" value="ECO:0007669"/>
    <property type="project" value="TreeGrafter"/>
</dbReference>
<dbReference type="GO" id="GO:0006543">
    <property type="term" value="P:glutamine catabolic process"/>
    <property type="evidence" value="ECO:0007669"/>
    <property type="project" value="TreeGrafter"/>
</dbReference>
<dbReference type="FunFam" id="3.40.710.10:FF:000005">
    <property type="entry name" value="Glutaminase"/>
    <property type="match status" value="1"/>
</dbReference>
<dbReference type="Gene3D" id="3.40.710.10">
    <property type="entry name" value="DD-peptidase/beta-lactamase superfamily"/>
    <property type="match status" value="1"/>
</dbReference>
<dbReference type="HAMAP" id="MF_00313">
    <property type="entry name" value="Glutaminase"/>
    <property type="match status" value="1"/>
</dbReference>
<dbReference type="InterPro" id="IPR012338">
    <property type="entry name" value="Beta-lactam/transpept-like"/>
</dbReference>
<dbReference type="InterPro" id="IPR015868">
    <property type="entry name" value="Glutaminase"/>
</dbReference>
<dbReference type="NCBIfam" id="TIGR03814">
    <property type="entry name" value="Gln_ase"/>
    <property type="match status" value="1"/>
</dbReference>
<dbReference type="NCBIfam" id="NF002132">
    <property type="entry name" value="PRK00971.1-1"/>
    <property type="match status" value="1"/>
</dbReference>
<dbReference type="NCBIfam" id="NF002133">
    <property type="entry name" value="PRK00971.1-2"/>
    <property type="match status" value="1"/>
</dbReference>
<dbReference type="PANTHER" id="PTHR12544">
    <property type="entry name" value="GLUTAMINASE"/>
    <property type="match status" value="1"/>
</dbReference>
<dbReference type="PANTHER" id="PTHR12544:SF29">
    <property type="entry name" value="GLUTAMINASE"/>
    <property type="match status" value="1"/>
</dbReference>
<dbReference type="Pfam" id="PF04960">
    <property type="entry name" value="Glutaminase"/>
    <property type="match status" value="1"/>
</dbReference>
<dbReference type="SUPFAM" id="SSF56601">
    <property type="entry name" value="beta-lactamase/transpeptidase-like"/>
    <property type="match status" value="1"/>
</dbReference>
<accession>Q21GQ5</accession>
<keyword id="KW-0378">Hydrolase</keyword>
<keyword id="KW-1185">Reference proteome</keyword>
<proteinExistence type="inferred from homology"/>
<reference key="1">
    <citation type="journal article" date="2008" name="PLoS Genet.">
        <title>Complete genome sequence of the complex carbohydrate-degrading marine bacterium, Saccharophagus degradans strain 2-40 T.</title>
        <authorList>
            <person name="Weiner R.M."/>
            <person name="Taylor L.E. II"/>
            <person name="Henrissat B."/>
            <person name="Hauser L."/>
            <person name="Land M."/>
            <person name="Coutinho P.M."/>
            <person name="Rancurel C."/>
            <person name="Saunders E.H."/>
            <person name="Longmire A.G."/>
            <person name="Zhang H."/>
            <person name="Bayer E.A."/>
            <person name="Gilbert H.J."/>
            <person name="Larimer F."/>
            <person name="Zhulin I.B."/>
            <person name="Ekborg N.A."/>
            <person name="Lamed R."/>
            <person name="Richardson P.M."/>
            <person name="Borovok I."/>
            <person name="Hutcheson S."/>
        </authorList>
    </citation>
    <scope>NUCLEOTIDE SEQUENCE [LARGE SCALE GENOMIC DNA]</scope>
    <source>
        <strain>2-40 / ATCC 43961 / DSM 17024</strain>
    </source>
</reference>
<protein>
    <recommendedName>
        <fullName evidence="1">Glutaminase</fullName>
        <ecNumber evidence="1">3.5.1.2</ecNumber>
    </recommendedName>
</protein>
<organism>
    <name type="scientific">Saccharophagus degradans (strain 2-40 / ATCC 43961 / DSM 17024)</name>
    <dbReference type="NCBI Taxonomy" id="203122"/>
    <lineage>
        <taxon>Bacteria</taxon>
        <taxon>Pseudomonadati</taxon>
        <taxon>Pseudomonadota</taxon>
        <taxon>Gammaproteobacteria</taxon>
        <taxon>Cellvibrionales</taxon>
        <taxon>Cellvibrionaceae</taxon>
        <taxon>Saccharophagus</taxon>
    </lineage>
</organism>
<name>GLSA_SACD2</name>
<gene>
    <name evidence="1" type="primary">glsA</name>
    <name type="ordered locus">Sde_2867</name>
</gene>